<gene>
    <name evidence="1" type="primary">rpsG</name>
    <name type="ordered locus">Pnap_0199</name>
</gene>
<evidence type="ECO:0000255" key="1">
    <source>
        <dbReference type="HAMAP-Rule" id="MF_00480"/>
    </source>
</evidence>
<evidence type="ECO:0000305" key="2"/>
<reference key="1">
    <citation type="journal article" date="2009" name="Environ. Microbiol.">
        <title>The genome of Polaromonas naphthalenivorans strain CJ2, isolated from coal tar-contaminated sediment, reveals physiological and metabolic versatility and evolution through extensive horizontal gene transfer.</title>
        <authorList>
            <person name="Yagi J.M."/>
            <person name="Sims D."/>
            <person name="Brettin T."/>
            <person name="Bruce D."/>
            <person name="Madsen E.L."/>
        </authorList>
    </citation>
    <scope>NUCLEOTIDE SEQUENCE [LARGE SCALE GENOMIC DNA]</scope>
    <source>
        <strain>CJ2</strain>
    </source>
</reference>
<keyword id="KW-1185">Reference proteome</keyword>
<keyword id="KW-0687">Ribonucleoprotein</keyword>
<keyword id="KW-0689">Ribosomal protein</keyword>
<keyword id="KW-0694">RNA-binding</keyword>
<keyword id="KW-0699">rRNA-binding</keyword>
<keyword id="KW-0820">tRNA-binding</keyword>
<proteinExistence type="inferred from homology"/>
<organism>
    <name type="scientific">Polaromonas naphthalenivorans (strain CJ2)</name>
    <dbReference type="NCBI Taxonomy" id="365044"/>
    <lineage>
        <taxon>Bacteria</taxon>
        <taxon>Pseudomonadati</taxon>
        <taxon>Pseudomonadota</taxon>
        <taxon>Betaproteobacteria</taxon>
        <taxon>Burkholderiales</taxon>
        <taxon>Comamonadaceae</taxon>
        <taxon>Polaromonas</taxon>
    </lineage>
</organism>
<feature type="chain" id="PRO_1000014252" description="Small ribosomal subunit protein uS7">
    <location>
        <begin position="1"/>
        <end position="157"/>
    </location>
</feature>
<comment type="function">
    <text evidence="1">One of the primary rRNA binding proteins, it binds directly to 16S rRNA where it nucleates assembly of the head domain of the 30S subunit. Is located at the subunit interface close to the decoding center, probably blocks exit of the E-site tRNA.</text>
</comment>
<comment type="subunit">
    <text evidence="1">Part of the 30S ribosomal subunit. Contacts proteins S9 and S11.</text>
</comment>
<comment type="similarity">
    <text evidence="1">Belongs to the universal ribosomal protein uS7 family.</text>
</comment>
<accession>A1VIP6</accession>
<name>RS7_POLNA</name>
<sequence length="157" mass="17900">MPRRREVPKREILPDPKFGDVDLAKFMNVIMQGGKKAVAERIIYGALEQIEKKNPGKDPLEAFHMAIGNIKPMVEVKSRRVGGANYQVPVEVRPVRRMALAMRWLKEAAKKRGEKSMSLRLANELMEATEGRGGAMKKRDEVHRMAEANKAFSHFRF</sequence>
<protein>
    <recommendedName>
        <fullName evidence="1">Small ribosomal subunit protein uS7</fullName>
    </recommendedName>
    <alternativeName>
        <fullName evidence="2">30S ribosomal protein S7</fullName>
    </alternativeName>
</protein>
<dbReference type="EMBL" id="CP000529">
    <property type="protein sequence ID" value="ABM35524.1"/>
    <property type="molecule type" value="Genomic_DNA"/>
</dbReference>
<dbReference type="RefSeq" id="WP_011799634.1">
    <property type="nucleotide sequence ID" value="NC_008781.1"/>
</dbReference>
<dbReference type="SMR" id="A1VIP6"/>
<dbReference type="STRING" id="365044.Pnap_0199"/>
<dbReference type="KEGG" id="pna:Pnap_0199"/>
<dbReference type="eggNOG" id="COG0049">
    <property type="taxonomic scope" value="Bacteria"/>
</dbReference>
<dbReference type="HOGENOM" id="CLU_072226_1_1_4"/>
<dbReference type="OrthoDB" id="9807653at2"/>
<dbReference type="Proteomes" id="UP000000644">
    <property type="component" value="Chromosome"/>
</dbReference>
<dbReference type="GO" id="GO:0015935">
    <property type="term" value="C:small ribosomal subunit"/>
    <property type="evidence" value="ECO:0007669"/>
    <property type="project" value="InterPro"/>
</dbReference>
<dbReference type="GO" id="GO:0019843">
    <property type="term" value="F:rRNA binding"/>
    <property type="evidence" value="ECO:0007669"/>
    <property type="project" value="UniProtKB-UniRule"/>
</dbReference>
<dbReference type="GO" id="GO:0003735">
    <property type="term" value="F:structural constituent of ribosome"/>
    <property type="evidence" value="ECO:0007669"/>
    <property type="project" value="InterPro"/>
</dbReference>
<dbReference type="GO" id="GO:0000049">
    <property type="term" value="F:tRNA binding"/>
    <property type="evidence" value="ECO:0007669"/>
    <property type="project" value="UniProtKB-UniRule"/>
</dbReference>
<dbReference type="GO" id="GO:0006412">
    <property type="term" value="P:translation"/>
    <property type="evidence" value="ECO:0007669"/>
    <property type="project" value="UniProtKB-UniRule"/>
</dbReference>
<dbReference type="CDD" id="cd14869">
    <property type="entry name" value="uS7_Bacteria"/>
    <property type="match status" value="1"/>
</dbReference>
<dbReference type="FunFam" id="1.10.455.10:FF:000001">
    <property type="entry name" value="30S ribosomal protein S7"/>
    <property type="match status" value="1"/>
</dbReference>
<dbReference type="Gene3D" id="1.10.455.10">
    <property type="entry name" value="Ribosomal protein S7 domain"/>
    <property type="match status" value="1"/>
</dbReference>
<dbReference type="HAMAP" id="MF_00480_B">
    <property type="entry name" value="Ribosomal_uS7_B"/>
    <property type="match status" value="1"/>
</dbReference>
<dbReference type="InterPro" id="IPR000235">
    <property type="entry name" value="Ribosomal_uS7"/>
</dbReference>
<dbReference type="InterPro" id="IPR005717">
    <property type="entry name" value="Ribosomal_uS7_bac/org-type"/>
</dbReference>
<dbReference type="InterPro" id="IPR020606">
    <property type="entry name" value="Ribosomal_uS7_CS"/>
</dbReference>
<dbReference type="InterPro" id="IPR023798">
    <property type="entry name" value="Ribosomal_uS7_dom"/>
</dbReference>
<dbReference type="InterPro" id="IPR036823">
    <property type="entry name" value="Ribosomal_uS7_dom_sf"/>
</dbReference>
<dbReference type="NCBIfam" id="TIGR01029">
    <property type="entry name" value="rpsG_bact"/>
    <property type="match status" value="1"/>
</dbReference>
<dbReference type="PANTHER" id="PTHR11205">
    <property type="entry name" value="RIBOSOMAL PROTEIN S7"/>
    <property type="match status" value="1"/>
</dbReference>
<dbReference type="Pfam" id="PF00177">
    <property type="entry name" value="Ribosomal_S7"/>
    <property type="match status" value="1"/>
</dbReference>
<dbReference type="PIRSF" id="PIRSF002122">
    <property type="entry name" value="RPS7p_RPS7a_RPS5e_RPS7o"/>
    <property type="match status" value="1"/>
</dbReference>
<dbReference type="SUPFAM" id="SSF47973">
    <property type="entry name" value="Ribosomal protein S7"/>
    <property type="match status" value="1"/>
</dbReference>
<dbReference type="PROSITE" id="PS00052">
    <property type="entry name" value="RIBOSOMAL_S7"/>
    <property type="match status" value="1"/>
</dbReference>